<dbReference type="EC" id="3.1.-.-"/>
<dbReference type="EMBL" id="AY653733">
    <property type="protein sequence ID" value="AAV50517.1"/>
    <property type="molecule type" value="Genomic_DNA"/>
</dbReference>
<dbReference type="SMR" id="Q5UPT6"/>
<dbReference type="KEGG" id="vg:9924852"/>
<dbReference type="OrthoDB" id="9906at10239"/>
<dbReference type="Proteomes" id="UP000001134">
    <property type="component" value="Genome"/>
</dbReference>
<dbReference type="GO" id="GO:0004519">
    <property type="term" value="F:endonuclease activity"/>
    <property type="evidence" value="ECO:0007669"/>
    <property type="project" value="UniProtKB-KW"/>
</dbReference>
<dbReference type="Gene3D" id="3.90.75.20">
    <property type="match status" value="2"/>
</dbReference>
<dbReference type="Gene3D" id="1.10.10.10">
    <property type="entry name" value="Winged helix-like DNA-binding domain superfamily/Winged helix DNA-binding domain"/>
    <property type="match status" value="1"/>
</dbReference>
<dbReference type="InterPro" id="IPR044925">
    <property type="entry name" value="His-Me_finger_sf"/>
</dbReference>
<dbReference type="InterPro" id="IPR003615">
    <property type="entry name" value="HNH_nuc"/>
</dbReference>
<dbReference type="InterPro" id="IPR003647">
    <property type="entry name" value="Intron_nuc_1_rpt"/>
</dbReference>
<dbReference type="InterPro" id="IPR010896">
    <property type="entry name" value="NUMOD1"/>
</dbReference>
<dbReference type="InterPro" id="IPR010902">
    <property type="entry name" value="NUMOD4"/>
</dbReference>
<dbReference type="InterPro" id="IPR036388">
    <property type="entry name" value="WH-like_DNA-bd_sf"/>
</dbReference>
<dbReference type="Pfam" id="PF13392">
    <property type="entry name" value="HNH_3"/>
    <property type="match status" value="1"/>
</dbReference>
<dbReference type="Pfam" id="PF07453">
    <property type="entry name" value="NUMOD1"/>
    <property type="match status" value="2"/>
</dbReference>
<dbReference type="Pfam" id="PF07463">
    <property type="entry name" value="NUMOD4"/>
    <property type="match status" value="1"/>
</dbReference>
<dbReference type="SMART" id="SM00507">
    <property type="entry name" value="HNHc"/>
    <property type="match status" value="2"/>
</dbReference>
<dbReference type="SMART" id="SM00497">
    <property type="entry name" value="IENR1"/>
    <property type="match status" value="2"/>
</dbReference>
<dbReference type="SUPFAM" id="SSF64496">
    <property type="entry name" value="DNA-binding domain of intron-encoded endonucleases"/>
    <property type="match status" value="1"/>
</dbReference>
<dbReference type="SUPFAM" id="SSF54060">
    <property type="entry name" value="His-Me finger endonucleases"/>
    <property type="match status" value="2"/>
</dbReference>
<sequence length="330" mass="38242">MVTKWKKICLFDNYEISNTGKIRNSKSGKLLKFSMRKGYYCCSLSKNNTKKTFNVHRLVARIFINNPSKFNVVNHKDGNKLNNNSSNLEWTNYKHNANHAITNGLKKIFRKKIHQYDINGNYIDSFESINNAGLYTGINPKHISSTCLGKRKTCGGFIWEYDKKFSKEKKNGLPLENNNNYLITKDGRVFSKRANKYLKPKIDPDGYLLVSISTNNVNKQISIHRLVAMTYIENPNNYPYVNHIDNNKQNNNITNLEWCTPKQNMIHHIKTRTKIYTVKVAQYDMNYNVITSYASIKEAGEKTGIDKSSIVRVCKGKQKYAGKYIWSYIN</sequence>
<organismHost>
    <name type="scientific">Acanthamoeba polyphaga</name>
    <name type="common">Amoeba</name>
    <dbReference type="NCBI Taxonomy" id="5757"/>
</organismHost>
<accession>Q5UPT6</accession>
<gene>
    <name type="ordered locus">MIMI_L245</name>
</gene>
<name>YL245_MIMIV</name>
<keyword id="KW-0255">Endonuclease</keyword>
<keyword id="KW-0378">Hydrolase</keyword>
<keyword id="KW-0540">Nuclease</keyword>
<keyword id="KW-1185">Reference proteome</keyword>
<proteinExistence type="predicted"/>
<protein>
    <recommendedName>
        <fullName>Uncharacterized HNH endonuclease L245</fullName>
        <ecNumber>3.1.-.-</ecNumber>
    </recommendedName>
</protein>
<feature type="chain" id="PRO_0000309577" description="Uncharacterized HNH endonuclease L245">
    <location>
        <begin position="1"/>
        <end position="330"/>
    </location>
</feature>
<reference key="1">
    <citation type="journal article" date="2004" name="Science">
        <title>The 1.2-megabase genome sequence of Mimivirus.</title>
        <authorList>
            <person name="Raoult D."/>
            <person name="Audic S."/>
            <person name="Robert C."/>
            <person name="Abergel C."/>
            <person name="Renesto P."/>
            <person name="Ogata H."/>
            <person name="La Scola B."/>
            <person name="Susan M."/>
            <person name="Claverie J.-M."/>
        </authorList>
    </citation>
    <scope>NUCLEOTIDE SEQUENCE [LARGE SCALE GENOMIC DNA]</scope>
    <source>
        <strain>Rowbotham-Bradford</strain>
    </source>
</reference>
<organism>
    <name type="scientific">Acanthamoeba polyphaga mimivirus</name>
    <name type="common">APMV</name>
    <dbReference type="NCBI Taxonomy" id="212035"/>
    <lineage>
        <taxon>Viruses</taxon>
        <taxon>Varidnaviria</taxon>
        <taxon>Bamfordvirae</taxon>
        <taxon>Nucleocytoviricota</taxon>
        <taxon>Megaviricetes</taxon>
        <taxon>Imitervirales</taxon>
        <taxon>Mimiviridae</taxon>
        <taxon>Megamimivirinae</taxon>
        <taxon>Mimivirus</taxon>
        <taxon>Mimivirus bradfordmassiliense</taxon>
    </lineage>
</organism>